<sequence>MKTGIHPEYRPVVFVDTSTDFKFLSGSTKSSSETIKWEDGNEYPLLRVEISSDSHPFYTGKQKHATADGRVDRFNKKYGLK</sequence>
<protein>
    <recommendedName>
        <fullName evidence="1">Large ribosomal subunit protein bL31B</fullName>
    </recommendedName>
    <alternativeName>
        <fullName evidence="2">50S ribosomal protein L31 type B</fullName>
    </alternativeName>
</protein>
<reference key="1">
    <citation type="journal article" date="2000" name="J. Bacteriol.">
        <title>A sheep in wolf's clothing: Listeria innocua strains with teichoic acid-associated surface antigens and genes characteristic of Listeria monocytogenes serogroup 4.</title>
        <authorList>
            <person name="Lan Z."/>
            <person name="Fiedler F."/>
            <person name="Kathariou S."/>
        </authorList>
    </citation>
    <scope>NUCLEOTIDE SEQUENCE [GENOMIC DNA]</scope>
    <source>
        <strain>F8596</strain>
    </source>
</reference>
<reference key="2">
    <citation type="journal article" date="2001" name="Science">
        <title>Comparative genomics of Listeria species.</title>
        <authorList>
            <person name="Glaser P."/>
            <person name="Frangeul L."/>
            <person name="Buchrieser C."/>
            <person name="Rusniok C."/>
            <person name="Amend A."/>
            <person name="Baquero F."/>
            <person name="Berche P."/>
            <person name="Bloecker H."/>
            <person name="Brandt P."/>
            <person name="Chakraborty T."/>
            <person name="Charbit A."/>
            <person name="Chetouani F."/>
            <person name="Couve E."/>
            <person name="de Daruvar A."/>
            <person name="Dehoux P."/>
            <person name="Domann E."/>
            <person name="Dominguez-Bernal G."/>
            <person name="Duchaud E."/>
            <person name="Durant L."/>
            <person name="Dussurget O."/>
            <person name="Entian K.-D."/>
            <person name="Fsihi H."/>
            <person name="Garcia-del Portillo F."/>
            <person name="Garrido P."/>
            <person name="Gautier L."/>
            <person name="Goebel W."/>
            <person name="Gomez-Lopez N."/>
            <person name="Hain T."/>
            <person name="Hauf J."/>
            <person name="Jackson D."/>
            <person name="Jones L.-M."/>
            <person name="Kaerst U."/>
            <person name="Kreft J."/>
            <person name="Kuhn M."/>
            <person name="Kunst F."/>
            <person name="Kurapkat G."/>
            <person name="Madueno E."/>
            <person name="Maitournam A."/>
            <person name="Mata Vicente J."/>
            <person name="Ng E."/>
            <person name="Nedjari H."/>
            <person name="Nordsiek G."/>
            <person name="Novella S."/>
            <person name="de Pablos B."/>
            <person name="Perez-Diaz J.-C."/>
            <person name="Purcell R."/>
            <person name="Remmel B."/>
            <person name="Rose M."/>
            <person name="Schlueter T."/>
            <person name="Simoes N."/>
            <person name="Tierrez A."/>
            <person name="Vazquez-Boland J.-A."/>
            <person name="Voss H."/>
            <person name="Wehland J."/>
            <person name="Cossart P."/>
        </authorList>
    </citation>
    <scope>NUCLEOTIDE SEQUENCE [LARGE SCALE GENOMIC DNA]</scope>
    <source>
        <strain>ATCC BAA-680 / CLIP 11262</strain>
    </source>
</reference>
<comment type="subunit">
    <text evidence="1">Part of the 50S ribosomal subunit.</text>
</comment>
<comment type="similarity">
    <text evidence="1">Belongs to the bacterial ribosomal protein bL31 family. Type B subfamily.</text>
</comment>
<accession>P0A486</accession>
<accession>Q9KJU7</accession>
<accession>Q9ZH28</accession>
<name>RL31B_LISIN</name>
<organism>
    <name type="scientific">Listeria innocua serovar 6a (strain ATCC BAA-680 / CLIP 11262)</name>
    <dbReference type="NCBI Taxonomy" id="272626"/>
    <lineage>
        <taxon>Bacteria</taxon>
        <taxon>Bacillati</taxon>
        <taxon>Bacillota</taxon>
        <taxon>Bacilli</taxon>
        <taxon>Bacillales</taxon>
        <taxon>Listeriaceae</taxon>
        <taxon>Listeria</taxon>
    </lineage>
</organism>
<dbReference type="EMBL" id="AF160251">
    <property type="protein sequence ID" value="AAF80389.1"/>
    <property type="molecule type" value="Genomic_DNA"/>
</dbReference>
<dbReference type="EMBL" id="AL596173">
    <property type="protein sequence ID" value="CAC97918.1"/>
    <property type="molecule type" value="Genomic_DNA"/>
</dbReference>
<dbReference type="PIR" id="AF1768">
    <property type="entry name" value="AF1768"/>
</dbReference>
<dbReference type="RefSeq" id="WP_003726356.1">
    <property type="nucleotide sequence ID" value="NC_003212.1"/>
</dbReference>
<dbReference type="SMR" id="P0A486"/>
<dbReference type="STRING" id="272626.gene:17567072"/>
<dbReference type="KEGG" id="lin:rpmE"/>
<dbReference type="eggNOG" id="COG0254">
    <property type="taxonomic scope" value="Bacteria"/>
</dbReference>
<dbReference type="HOGENOM" id="CLU_114306_2_2_9"/>
<dbReference type="OrthoDB" id="9803251at2"/>
<dbReference type="Proteomes" id="UP000002513">
    <property type="component" value="Chromosome"/>
</dbReference>
<dbReference type="GO" id="GO:1990904">
    <property type="term" value="C:ribonucleoprotein complex"/>
    <property type="evidence" value="ECO:0007669"/>
    <property type="project" value="UniProtKB-KW"/>
</dbReference>
<dbReference type="GO" id="GO:0005840">
    <property type="term" value="C:ribosome"/>
    <property type="evidence" value="ECO:0007669"/>
    <property type="project" value="UniProtKB-KW"/>
</dbReference>
<dbReference type="GO" id="GO:0003735">
    <property type="term" value="F:structural constituent of ribosome"/>
    <property type="evidence" value="ECO:0007669"/>
    <property type="project" value="InterPro"/>
</dbReference>
<dbReference type="GO" id="GO:0006412">
    <property type="term" value="P:translation"/>
    <property type="evidence" value="ECO:0007669"/>
    <property type="project" value="UniProtKB-UniRule"/>
</dbReference>
<dbReference type="Gene3D" id="4.10.830.30">
    <property type="entry name" value="Ribosomal protein L31"/>
    <property type="match status" value="1"/>
</dbReference>
<dbReference type="HAMAP" id="MF_00502">
    <property type="entry name" value="Ribosomal_bL31_2"/>
    <property type="match status" value="1"/>
</dbReference>
<dbReference type="InterPro" id="IPR034704">
    <property type="entry name" value="Ribosomal_bL28/bL31-like_sf"/>
</dbReference>
<dbReference type="InterPro" id="IPR002150">
    <property type="entry name" value="Ribosomal_bL31"/>
</dbReference>
<dbReference type="InterPro" id="IPR027493">
    <property type="entry name" value="Ribosomal_bL31_B"/>
</dbReference>
<dbReference type="InterPro" id="IPR042105">
    <property type="entry name" value="Ribosomal_bL31_sf"/>
</dbReference>
<dbReference type="NCBIfam" id="TIGR00105">
    <property type="entry name" value="L31"/>
    <property type="match status" value="1"/>
</dbReference>
<dbReference type="NCBIfam" id="NF002462">
    <property type="entry name" value="PRK01678.1"/>
    <property type="match status" value="1"/>
</dbReference>
<dbReference type="PANTHER" id="PTHR33280">
    <property type="entry name" value="50S RIBOSOMAL PROTEIN L31, CHLOROPLASTIC"/>
    <property type="match status" value="1"/>
</dbReference>
<dbReference type="PANTHER" id="PTHR33280:SF1">
    <property type="entry name" value="LARGE RIBOSOMAL SUBUNIT PROTEIN BL31C"/>
    <property type="match status" value="1"/>
</dbReference>
<dbReference type="Pfam" id="PF01197">
    <property type="entry name" value="Ribosomal_L31"/>
    <property type="match status" value="1"/>
</dbReference>
<dbReference type="PRINTS" id="PR01249">
    <property type="entry name" value="RIBOSOMALL31"/>
</dbReference>
<dbReference type="SUPFAM" id="SSF143800">
    <property type="entry name" value="L28p-like"/>
    <property type="match status" value="1"/>
</dbReference>
<dbReference type="PROSITE" id="PS01143">
    <property type="entry name" value="RIBOSOMAL_L31"/>
    <property type="match status" value="1"/>
</dbReference>
<evidence type="ECO:0000255" key="1">
    <source>
        <dbReference type="HAMAP-Rule" id="MF_00502"/>
    </source>
</evidence>
<evidence type="ECO:0000305" key="2"/>
<keyword id="KW-0687">Ribonucleoprotein</keyword>
<keyword id="KW-0689">Ribosomal protein</keyword>
<proteinExistence type="inferred from homology"/>
<gene>
    <name evidence="1" type="primary">rpmE2</name>
    <name type="synonym">rpmE</name>
    <name type="ordered locus">lin2692</name>
</gene>
<feature type="chain" id="PRO_0000173234" description="Large ribosomal subunit protein bL31B">
    <location>
        <begin position="1"/>
        <end position="81"/>
    </location>
</feature>